<sequence length="441" mass="48182">MIRKVFFALVGCLLLSQSAQAALDIVITGGIDSARPIAIAPFKWEGNGQLPQDIAEVVSNDLMRSGKFKPLARGQMPQTPSSSGEINFAPWASQGVEAVVVGSIAAVGDGTYKINFELVDVLKGQLAKTQGGESNGYILDSRMATIPGAQMRQFAHRISDIVYERLTGERGAFLTRIAYVSIEQGAQFPYQLRISDYDGYNEKTLLRSREPLMSPAWSPDGSKLAYVSFENQKSEIYVQDIYNQQRSLISSFRGINGAPKWSPDGRRLAIVLSKDGQPDIYVIDVASKQLTRVTNTRVIDTEPAWMPDGQTLIFTSERGGKPQIYSVNLATGVTRRMTWEGESNQGASVTPDGKSMVMVTRVQGQYRIARQDMESGAMLVLTQSALDESPSVAPNGSMIIYATIYQGRKSLALVSTDGRFKAVLPTSSGEIRAPAWSPFLN</sequence>
<feature type="signal peptide" evidence="1">
    <location>
        <begin position="1"/>
        <end position="21"/>
    </location>
</feature>
<feature type="chain" id="PRO_1000061935" description="Tol-Pal system protein TolB" evidence="1">
    <location>
        <begin position="22"/>
        <end position="441"/>
    </location>
</feature>
<accession>A4SJ35</accession>
<evidence type="ECO:0000255" key="1">
    <source>
        <dbReference type="HAMAP-Rule" id="MF_00671"/>
    </source>
</evidence>
<reference key="1">
    <citation type="journal article" date="2008" name="BMC Genomics">
        <title>The genome of Aeromonas salmonicida subsp. salmonicida A449: insights into the evolution of a fish pathogen.</title>
        <authorList>
            <person name="Reith M.E."/>
            <person name="Singh R.K."/>
            <person name="Curtis B."/>
            <person name="Boyd J.M."/>
            <person name="Bouevitch A."/>
            <person name="Kimball J."/>
            <person name="Munholland J."/>
            <person name="Murphy C."/>
            <person name="Sarty D."/>
            <person name="Williams J."/>
            <person name="Nash J.H."/>
            <person name="Johnson S.C."/>
            <person name="Brown L.L."/>
        </authorList>
    </citation>
    <scope>NUCLEOTIDE SEQUENCE [LARGE SCALE GENOMIC DNA]</scope>
    <source>
        <strain>A449</strain>
    </source>
</reference>
<dbReference type="EMBL" id="CP000644">
    <property type="protein sequence ID" value="ABO88907.1"/>
    <property type="molecule type" value="Genomic_DNA"/>
</dbReference>
<dbReference type="RefSeq" id="WP_011898362.1">
    <property type="nucleotide sequence ID" value="NC_009348.1"/>
</dbReference>
<dbReference type="SMR" id="A4SJ35"/>
<dbReference type="STRING" id="29491.GCA_000820065_01744"/>
<dbReference type="GeneID" id="79878289"/>
<dbReference type="KEGG" id="asa:ASA_0745"/>
<dbReference type="eggNOG" id="COG0823">
    <property type="taxonomic scope" value="Bacteria"/>
</dbReference>
<dbReference type="HOGENOM" id="CLU_047123_0_0_6"/>
<dbReference type="Proteomes" id="UP000000225">
    <property type="component" value="Chromosome"/>
</dbReference>
<dbReference type="GO" id="GO:0042597">
    <property type="term" value="C:periplasmic space"/>
    <property type="evidence" value="ECO:0007669"/>
    <property type="project" value="UniProtKB-SubCell"/>
</dbReference>
<dbReference type="GO" id="GO:0051301">
    <property type="term" value="P:cell division"/>
    <property type="evidence" value="ECO:0007669"/>
    <property type="project" value="UniProtKB-UniRule"/>
</dbReference>
<dbReference type="GO" id="GO:0017038">
    <property type="term" value="P:protein import"/>
    <property type="evidence" value="ECO:0007669"/>
    <property type="project" value="InterPro"/>
</dbReference>
<dbReference type="Gene3D" id="2.120.10.30">
    <property type="entry name" value="TolB, C-terminal domain"/>
    <property type="match status" value="1"/>
</dbReference>
<dbReference type="Gene3D" id="3.40.50.10070">
    <property type="entry name" value="TolB, N-terminal domain"/>
    <property type="match status" value="1"/>
</dbReference>
<dbReference type="HAMAP" id="MF_00671">
    <property type="entry name" value="TolB"/>
    <property type="match status" value="1"/>
</dbReference>
<dbReference type="InterPro" id="IPR011042">
    <property type="entry name" value="6-blade_b-propeller_TolB-like"/>
</dbReference>
<dbReference type="InterPro" id="IPR011659">
    <property type="entry name" value="PD40"/>
</dbReference>
<dbReference type="InterPro" id="IPR014167">
    <property type="entry name" value="Tol-Pal_TolB"/>
</dbReference>
<dbReference type="InterPro" id="IPR007195">
    <property type="entry name" value="TolB_N"/>
</dbReference>
<dbReference type="NCBIfam" id="TIGR02800">
    <property type="entry name" value="propeller_TolB"/>
    <property type="match status" value="1"/>
</dbReference>
<dbReference type="PANTHER" id="PTHR36842:SF1">
    <property type="entry name" value="PROTEIN TOLB"/>
    <property type="match status" value="1"/>
</dbReference>
<dbReference type="PANTHER" id="PTHR36842">
    <property type="entry name" value="PROTEIN TOLB HOMOLOG"/>
    <property type="match status" value="1"/>
</dbReference>
<dbReference type="Pfam" id="PF07676">
    <property type="entry name" value="PD40"/>
    <property type="match status" value="4"/>
</dbReference>
<dbReference type="Pfam" id="PF04052">
    <property type="entry name" value="TolB_N"/>
    <property type="match status" value="1"/>
</dbReference>
<dbReference type="SUPFAM" id="SSF52964">
    <property type="entry name" value="TolB, N-terminal domain"/>
    <property type="match status" value="1"/>
</dbReference>
<dbReference type="SUPFAM" id="SSF69304">
    <property type="entry name" value="Tricorn protease N-terminal domain"/>
    <property type="match status" value="1"/>
</dbReference>
<organism>
    <name type="scientific">Aeromonas salmonicida (strain A449)</name>
    <dbReference type="NCBI Taxonomy" id="382245"/>
    <lineage>
        <taxon>Bacteria</taxon>
        <taxon>Pseudomonadati</taxon>
        <taxon>Pseudomonadota</taxon>
        <taxon>Gammaproteobacteria</taxon>
        <taxon>Aeromonadales</taxon>
        <taxon>Aeromonadaceae</taxon>
        <taxon>Aeromonas</taxon>
    </lineage>
</organism>
<comment type="function">
    <text evidence="1">Part of the Tol-Pal system, which plays a role in outer membrane invagination during cell division and is important for maintaining outer membrane integrity.</text>
</comment>
<comment type="subunit">
    <text evidence="1">The Tol-Pal system is composed of five core proteins: the inner membrane proteins TolA, TolQ and TolR, the periplasmic protein TolB and the outer membrane protein Pal. They form a network linking the inner and outer membranes and the peptidoglycan layer.</text>
</comment>
<comment type="subcellular location">
    <subcellularLocation>
        <location evidence="1">Periplasm</location>
    </subcellularLocation>
</comment>
<comment type="similarity">
    <text evidence="1">Belongs to the TolB family.</text>
</comment>
<protein>
    <recommendedName>
        <fullName evidence="1">Tol-Pal system protein TolB</fullName>
    </recommendedName>
</protein>
<name>TOLB_AERS4</name>
<gene>
    <name evidence="1" type="primary">tolB</name>
    <name type="ordered locus">ASA_0745</name>
</gene>
<keyword id="KW-0131">Cell cycle</keyword>
<keyword id="KW-0132">Cell division</keyword>
<keyword id="KW-0574">Periplasm</keyword>
<keyword id="KW-0732">Signal</keyword>
<proteinExistence type="inferred from homology"/>